<reference evidence="4" key="1">
    <citation type="journal article" date="2009" name="Gen. Comp. Endocrinol.">
        <title>Extended FMRFamides in dipteran insects: conservative expression in the neuroendocrine system is accompanied by rapid sequence evolution.</title>
        <authorList>
            <person name="Rahman M.M."/>
            <person name="Fromm B."/>
            <person name="Neupert S."/>
            <person name="Kreusch S."/>
            <person name="Predel R."/>
        </authorList>
    </citation>
    <scope>PROTEIN SEQUENCE</scope>
    <scope>TISSUE SPECIFICITY</scope>
    <scope>MASS SPECTROMETRY</scope>
    <scope>AMIDATION AT PHE-9</scope>
    <source>
        <strain evidence="2">Bangladesh</strain>
        <strain evidence="2">Goondiwindi</strain>
        <tissue evidence="2">Dorsal ganglionic sheath</tissue>
    </source>
</reference>
<feature type="peptide" id="PRO_0000392474" description="FMRFamide-5">
    <location>
        <begin position="1"/>
        <end position="9"/>
    </location>
</feature>
<feature type="modified residue" description="Phenylalanine amide" evidence="2">
    <location>
        <position position="9"/>
    </location>
</feature>
<organism>
    <name type="scientific">Lucilia cuprina</name>
    <name type="common">Green bottle fly</name>
    <name type="synonym">Australian sheep blowfly</name>
    <dbReference type="NCBI Taxonomy" id="7375"/>
    <lineage>
        <taxon>Eukaryota</taxon>
        <taxon>Metazoa</taxon>
        <taxon>Ecdysozoa</taxon>
        <taxon>Arthropoda</taxon>
        <taxon>Hexapoda</taxon>
        <taxon>Insecta</taxon>
        <taxon>Pterygota</taxon>
        <taxon>Neoptera</taxon>
        <taxon>Endopterygota</taxon>
        <taxon>Diptera</taxon>
        <taxon>Brachycera</taxon>
        <taxon>Muscomorpha</taxon>
        <taxon>Oestroidea</taxon>
        <taxon>Calliphoridae</taxon>
        <taxon>Luciliinae</taxon>
        <taxon>Lucilia</taxon>
    </lineage>
</organism>
<accession>P85452</accession>
<dbReference type="GO" id="GO:0005576">
    <property type="term" value="C:extracellular region"/>
    <property type="evidence" value="ECO:0007669"/>
    <property type="project" value="UniProtKB-SubCell"/>
</dbReference>
<dbReference type="GO" id="GO:0007218">
    <property type="term" value="P:neuropeptide signaling pathway"/>
    <property type="evidence" value="ECO:0007669"/>
    <property type="project" value="UniProtKB-KW"/>
</dbReference>
<comment type="subcellular location">
    <subcellularLocation>
        <location evidence="4">Secreted</location>
    </subcellularLocation>
</comment>
<comment type="tissue specificity">
    <text evidence="2">Detected in the thoracic perisympathetic organs in larvae, and the dorsal ganglionic sheath in adults (at protein level).</text>
</comment>
<comment type="mass spectrometry"/>
<comment type="similarity">
    <text evidence="1">Belongs to the FARP (FMRFamide related peptide) family.</text>
</comment>
<name>FAR5_LUCCU</name>
<sequence>SPTQDFMRF</sequence>
<proteinExistence type="evidence at protein level"/>
<keyword id="KW-0027">Amidation</keyword>
<keyword id="KW-0903">Direct protein sequencing</keyword>
<keyword id="KW-0527">Neuropeptide</keyword>
<keyword id="KW-0964">Secreted</keyword>
<evidence type="ECO:0000255" key="1"/>
<evidence type="ECO:0000269" key="2">
    <source>
    </source>
</evidence>
<evidence type="ECO:0000303" key="3">
    <source>
    </source>
</evidence>
<evidence type="ECO:0000305" key="4"/>
<protein>
    <recommendedName>
        <fullName>FMRFamide-5</fullName>
    </recommendedName>
    <alternativeName>
        <fullName evidence="3">LucFMRFamide-5</fullName>
    </alternativeName>
</protein>